<gene>
    <name evidence="1" type="primary">rpmD</name>
    <name type="ordered locus">STH3057</name>
</gene>
<sequence>MAGTLKITLKKGLAGRDQRIIATLKSLGLTKLNKTVERPDNPAVRGMIARVAHMVEVQEG</sequence>
<reference key="1">
    <citation type="journal article" date="2004" name="Nucleic Acids Res.">
        <title>Genome sequence of Symbiobacterium thermophilum, an uncultivable bacterium that depends on microbial commensalism.</title>
        <authorList>
            <person name="Ueda K."/>
            <person name="Yamashita A."/>
            <person name="Ishikawa J."/>
            <person name="Shimada M."/>
            <person name="Watsuji T."/>
            <person name="Morimura K."/>
            <person name="Ikeda H."/>
            <person name="Hattori M."/>
            <person name="Beppu T."/>
        </authorList>
    </citation>
    <scope>NUCLEOTIDE SEQUENCE [LARGE SCALE GENOMIC DNA]</scope>
    <source>
        <strain>DSM 24528 / JCM 14929 / IAM 14863 / T</strain>
    </source>
</reference>
<dbReference type="EMBL" id="AP006840">
    <property type="protein sequence ID" value="BAD42039.1"/>
    <property type="molecule type" value="Genomic_DNA"/>
</dbReference>
<dbReference type="RefSeq" id="WP_011197172.1">
    <property type="nucleotide sequence ID" value="NC_006177.1"/>
</dbReference>
<dbReference type="SMR" id="Q67JW1"/>
<dbReference type="STRING" id="292459.STH3057"/>
<dbReference type="KEGG" id="sth:STH3057"/>
<dbReference type="eggNOG" id="COG1841">
    <property type="taxonomic scope" value="Bacteria"/>
</dbReference>
<dbReference type="HOGENOM" id="CLU_131047_2_1_9"/>
<dbReference type="OrthoDB" id="9812790at2"/>
<dbReference type="Proteomes" id="UP000000417">
    <property type="component" value="Chromosome"/>
</dbReference>
<dbReference type="GO" id="GO:0022625">
    <property type="term" value="C:cytosolic large ribosomal subunit"/>
    <property type="evidence" value="ECO:0007669"/>
    <property type="project" value="TreeGrafter"/>
</dbReference>
<dbReference type="GO" id="GO:0003735">
    <property type="term" value="F:structural constituent of ribosome"/>
    <property type="evidence" value="ECO:0007669"/>
    <property type="project" value="InterPro"/>
</dbReference>
<dbReference type="GO" id="GO:0006412">
    <property type="term" value="P:translation"/>
    <property type="evidence" value="ECO:0007669"/>
    <property type="project" value="UniProtKB-UniRule"/>
</dbReference>
<dbReference type="CDD" id="cd01658">
    <property type="entry name" value="Ribosomal_L30"/>
    <property type="match status" value="1"/>
</dbReference>
<dbReference type="Gene3D" id="3.30.1390.20">
    <property type="entry name" value="Ribosomal protein L30, ferredoxin-like fold domain"/>
    <property type="match status" value="1"/>
</dbReference>
<dbReference type="HAMAP" id="MF_01371_B">
    <property type="entry name" value="Ribosomal_uL30_B"/>
    <property type="match status" value="1"/>
</dbReference>
<dbReference type="InterPro" id="IPR036919">
    <property type="entry name" value="Ribo_uL30_ferredoxin-like_sf"/>
</dbReference>
<dbReference type="InterPro" id="IPR005996">
    <property type="entry name" value="Ribosomal_uL30_bac-type"/>
</dbReference>
<dbReference type="InterPro" id="IPR016082">
    <property type="entry name" value="Ribosomal_uL30_ferredoxin-like"/>
</dbReference>
<dbReference type="NCBIfam" id="TIGR01308">
    <property type="entry name" value="rpmD_bact"/>
    <property type="match status" value="1"/>
</dbReference>
<dbReference type="PANTHER" id="PTHR15892:SF2">
    <property type="entry name" value="LARGE RIBOSOMAL SUBUNIT PROTEIN UL30M"/>
    <property type="match status" value="1"/>
</dbReference>
<dbReference type="PANTHER" id="PTHR15892">
    <property type="entry name" value="MITOCHONDRIAL RIBOSOMAL PROTEIN L30"/>
    <property type="match status" value="1"/>
</dbReference>
<dbReference type="Pfam" id="PF00327">
    <property type="entry name" value="Ribosomal_L30"/>
    <property type="match status" value="1"/>
</dbReference>
<dbReference type="PIRSF" id="PIRSF002211">
    <property type="entry name" value="Ribosomal_L30_bac-type"/>
    <property type="match status" value="1"/>
</dbReference>
<dbReference type="SUPFAM" id="SSF55129">
    <property type="entry name" value="Ribosomal protein L30p/L7e"/>
    <property type="match status" value="1"/>
</dbReference>
<protein>
    <recommendedName>
        <fullName evidence="1">Large ribosomal subunit protein uL30</fullName>
    </recommendedName>
    <alternativeName>
        <fullName evidence="2">50S ribosomal protein L30</fullName>
    </alternativeName>
</protein>
<keyword id="KW-1185">Reference proteome</keyword>
<keyword id="KW-0687">Ribonucleoprotein</keyword>
<keyword id="KW-0689">Ribosomal protein</keyword>
<organism>
    <name type="scientific">Symbiobacterium thermophilum (strain DSM 24528 / JCM 14929 / IAM 14863 / T)</name>
    <dbReference type="NCBI Taxonomy" id="292459"/>
    <lineage>
        <taxon>Bacteria</taxon>
        <taxon>Bacillati</taxon>
        <taxon>Bacillota</taxon>
        <taxon>Clostridia</taxon>
        <taxon>Eubacteriales</taxon>
        <taxon>Symbiobacteriaceae</taxon>
        <taxon>Symbiobacterium</taxon>
    </lineage>
</organism>
<evidence type="ECO:0000255" key="1">
    <source>
        <dbReference type="HAMAP-Rule" id="MF_01371"/>
    </source>
</evidence>
<evidence type="ECO:0000305" key="2"/>
<comment type="subunit">
    <text evidence="1">Part of the 50S ribosomal subunit.</text>
</comment>
<comment type="similarity">
    <text evidence="1">Belongs to the universal ribosomal protein uL30 family.</text>
</comment>
<name>RL30_SYMTH</name>
<feature type="chain" id="PRO_1000056122" description="Large ribosomal subunit protein uL30">
    <location>
        <begin position="1"/>
        <end position="60"/>
    </location>
</feature>
<accession>Q67JW1</accession>
<proteinExistence type="inferred from homology"/>